<feature type="chain" id="PRO_0000335036" description="Glutamyl-tRNA reductase">
    <location>
        <begin position="1"/>
        <end position="416"/>
    </location>
</feature>
<feature type="active site" description="Nucleophile" evidence="1">
    <location>
        <position position="52"/>
    </location>
</feature>
<feature type="binding site" evidence="1">
    <location>
        <begin position="51"/>
        <end position="54"/>
    </location>
    <ligand>
        <name>substrate</name>
    </ligand>
</feature>
<feature type="binding site" evidence="1">
    <location>
        <position position="110"/>
    </location>
    <ligand>
        <name>substrate</name>
    </ligand>
</feature>
<feature type="binding site" evidence="1">
    <location>
        <begin position="115"/>
        <end position="117"/>
    </location>
    <ligand>
        <name>substrate</name>
    </ligand>
</feature>
<feature type="binding site" evidence="1">
    <location>
        <position position="121"/>
    </location>
    <ligand>
        <name>substrate</name>
    </ligand>
</feature>
<feature type="binding site" evidence="1">
    <location>
        <begin position="190"/>
        <end position="195"/>
    </location>
    <ligand>
        <name>NADP(+)</name>
        <dbReference type="ChEBI" id="CHEBI:58349"/>
    </ligand>
</feature>
<feature type="site" description="Important for activity" evidence="1">
    <location>
        <position position="100"/>
    </location>
</feature>
<proteinExistence type="inferred from homology"/>
<organism>
    <name type="scientific">Francisella tularensis subsp. tularensis (strain SCHU S4 / Schu 4)</name>
    <dbReference type="NCBI Taxonomy" id="177416"/>
    <lineage>
        <taxon>Bacteria</taxon>
        <taxon>Pseudomonadati</taxon>
        <taxon>Pseudomonadota</taxon>
        <taxon>Gammaproteobacteria</taxon>
        <taxon>Thiotrichales</taxon>
        <taxon>Francisellaceae</taxon>
        <taxon>Francisella</taxon>
    </lineage>
</organism>
<protein>
    <recommendedName>
        <fullName evidence="1">Glutamyl-tRNA reductase</fullName>
        <shortName evidence="1">GluTR</shortName>
        <ecNumber evidence="1">1.2.1.70</ecNumber>
    </recommendedName>
</protein>
<keyword id="KW-0521">NADP</keyword>
<keyword id="KW-0560">Oxidoreductase</keyword>
<keyword id="KW-0627">Porphyrin biosynthesis</keyword>
<keyword id="KW-1185">Reference proteome</keyword>
<accession>Q5NIA9</accession>
<dbReference type="EC" id="1.2.1.70" evidence="1"/>
<dbReference type="EMBL" id="AJ749949">
    <property type="protein sequence ID" value="CAG44800.1"/>
    <property type="molecule type" value="Genomic_DNA"/>
</dbReference>
<dbReference type="RefSeq" id="YP_169233.1">
    <property type="nucleotide sequence ID" value="NC_006570.2"/>
</dbReference>
<dbReference type="SMR" id="Q5NIA9"/>
<dbReference type="IntAct" id="Q5NIA9">
    <property type="interactions" value="1"/>
</dbReference>
<dbReference type="STRING" id="177416.FTT_0167"/>
<dbReference type="DNASU" id="3192414"/>
<dbReference type="EnsemblBacteria" id="CAG44800">
    <property type="protein sequence ID" value="CAG44800"/>
    <property type="gene ID" value="FTT_0167"/>
</dbReference>
<dbReference type="KEGG" id="ftu:FTT_0167"/>
<dbReference type="PATRIC" id="fig|177416.18.peg.184"/>
<dbReference type="eggNOG" id="COG0373">
    <property type="taxonomic scope" value="Bacteria"/>
</dbReference>
<dbReference type="OrthoDB" id="110209at2"/>
<dbReference type="UniPathway" id="UPA00251">
    <property type="reaction ID" value="UER00316"/>
</dbReference>
<dbReference type="Proteomes" id="UP000001174">
    <property type="component" value="Chromosome"/>
</dbReference>
<dbReference type="GO" id="GO:0008883">
    <property type="term" value="F:glutamyl-tRNA reductase activity"/>
    <property type="evidence" value="ECO:0007669"/>
    <property type="project" value="UniProtKB-UniRule"/>
</dbReference>
<dbReference type="GO" id="GO:0050661">
    <property type="term" value="F:NADP binding"/>
    <property type="evidence" value="ECO:0007669"/>
    <property type="project" value="InterPro"/>
</dbReference>
<dbReference type="GO" id="GO:0019353">
    <property type="term" value="P:protoporphyrinogen IX biosynthetic process from glutamate"/>
    <property type="evidence" value="ECO:0007669"/>
    <property type="project" value="TreeGrafter"/>
</dbReference>
<dbReference type="CDD" id="cd05213">
    <property type="entry name" value="NAD_bind_Glutamyl_tRNA_reduct"/>
    <property type="match status" value="1"/>
</dbReference>
<dbReference type="FunFam" id="3.30.460.30:FF:000001">
    <property type="entry name" value="Glutamyl-tRNA reductase"/>
    <property type="match status" value="1"/>
</dbReference>
<dbReference type="Gene3D" id="3.30.460.30">
    <property type="entry name" value="Glutamyl-tRNA reductase, N-terminal domain"/>
    <property type="match status" value="1"/>
</dbReference>
<dbReference type="Gene3D" id="3.40.50.720">
    <property type="entry name" value="NAD(P)-binding Rossmann-like Domain"/>
    <property type="match status" value="1"/>
</dbReference>
<dbReference type="HAMAP" id="MF_00087">
    <property type="entry name" value="Glu_tRNA_reductase"/>
    <property type="match status" value="1"/>
</dbReference>
<dbReference type="InterPro" id="IPR000343">
    <property type="entry name" value="4pyrrol_synth_GluRdtase"/>
</dbReference>
<dbReference type="InterPro" id="IPR015896">
    <property type="entry name" value="4pyrrol_synth_GluRdtase_dimer"/>
</dbReference>
<dbReference type="InterPro" id="IPR015895">
    <property type="entry name" value="4pyrrol_synth_GluRdtase_N"/>
</dbReference>
<dbReference type="InterPro" id="IPR018214">
    <property type="entry name" value="GluRdtase_CS"/>
</dbReference>
<dbReference type="InterPro" id="IPR036453">
    <property type="entry name" value="GluRdtase_dimer_dom_sf"/>
</dbReference>
<dbReference type="InterPro" id="IPR036343">
    <property type="entry name" value="GluRdtase_N_sf"/>
</dbReference>
<dbReference type="InterPro" id="IPR036291">
    <property type="entry name" value="NAD(P)-bd_dom_sf"/>
</dbReference>
<dbReference type="InterPro" id="IPR006151">
    <property type="entry name" value="Shikm_DH/Glu-tRNA_Rdtase"/>
</dbReference>
<dbReference type="NCBIfam" id="TIGR01035">
    <property type="entry name" value="hemA"/>
    <property type="match status" value="1"/>
</dbReference>
<dbReference type="NCBIfam" id="NF010548">
    <property type="entry name" value="PRK13940.1"/>
    <property type="match status" value="1"/>
</dbReference>
<dbReference type="PANTHER" id="PTHR43013">
    <property type="entry name" value="GLUTAMYL-TRNA REDUCTASE"/>
    <property type="match status" value="1"/>
</dbReference>
<dbReference type="PANTHER" id="PTHR43013:SF1">
    <property type="entry name" value="GLUTAMYL-TRNA REDUCTASE"/>
    <property type="match status" value="1"/>
</dbReference>
<dbReference type="Pfam" id="PF00745">
    <property type="entry name" value="GlutR_dimer"/>
    <property type="match status" value="1"/>
</dbReference>
<dbReference type="Pfam" id="PF05201">
    <property type="entry name" value="GlutR_N"/>
    <property type="match status" value="1"/>
</dbReference>
<dbReference type="Pfam" id="PF01488">
    <property type="entry name" value="Shikimate_DH"/>
    <property type="match status" value="1"/>
</dbReference>
<dbReference type="PIRSF" id="PIRSF000445">
    <property type="entry name" value="4pyrrol_synth_GluRdtase"/>
    <property type="match status" value="1"/>
</dbReference>
<dbReference type="SUPFAM" id="SSF69742">
    <property type="entry name" value="Glutamyl tRNA-reductase catalytic, N-terminal domain"/>
    <property type="match status" value="1"/>
</dbReference>
<dbReference type="SUPFAM" id="SSF69075">
    <property type="entry name" value="Glutamyl tRNA-reductase dimerization domain"/>
    <property type="match status" value="1"/>
</dbReference>
<dbReference type="SUPFAM" id="SSF51735">
    <property type="entry name" value="NAD(P)-binding Rossmann-fold domains"/>
    <property type="match status" value="1"/>
</dbReference>
<dbReference type="PROSITE" id="PS00747">
    <property type="entry name" value="GLUTR"/>
    <property type="match status" value="1"/>
</dbReference>
<name>HEM1_FRATT</name>
<sequence length="416" mass="46976">MNMALISLAIDYKKSPIEVRSEFALSGLDVSMLYRSILAIDNVVHAVILSTCNRTEVYLEISDLRVVDDILVWWQGYVRNPNYKIKDYFKLRQGTEVIMHLMKLACGLESMVLGEPQILGQVKDSYTLSKKNHAIGKELDRVFQKVFATAKRVRSETRIGHCPVSVAFSAITLAKRQLDNISSKNVLIIGAGQTGELLFRHVTALAPKQIMLANRTIEKAQKITSAFRNASAHYLSELPQLIKKADIIIAAVNVLEYIVTCKYVGDKPRVFIDISIPQALDPKLGELEQNVYYCVDDINAVIEDNKDKRKYESSKAQKIIVKSLEEYLEKEKAIISNSAIKELFQKADGLVDLSLEKSLAKIRNGKDAEEIIKRFAYEIKKKVLHYPVVGMKEASKQGRSDCLVCMKRMFGLNVEK</sequence>
<gene>
    <name evidence="1" type="primary">hemA</name>
    <name type="ordered locus">FTT_0167</name>
</gene>
<reference key="1">
    <citation type="journal article" date="2005" name="Nat. Genet.">
        <title>The complete genome sequence of Francisella tularensis, the causative agent of tularemia.</title>
        <authorList>
            <person name="Larsson P."/>
            <person name="Oyston P.C.F."/>
            <person name="Chain P."/>
            <person name="Chu M.C."/>
            <person name="Duffield M."/>
            <person name="Fuxelius H.-H."/>
            <person name="Garcia E."/>
            <person name="Haelltorp G."/>
            <person name="Johansson D."/>
            <person name="Isherwood K.E."/>
            <person name="Karp P.D."/>
            <person name="Larsson E."/>
            <person name="Liu Y."/>
            <person name="Michell S."/>
            <person name="Prior J."/>
            <person name="Prior R."/>
            <person name="Malfatti S."/>
            <person name="Sjoestedt A."/>
            <person name="Svensson K."/>
            <person name="Thompson N."/>
            <person name="Vergez L."/>
            <person name="Wagg J.K."/>
            <person name="Wren B.W."/>
            <person name="Lindler L.E."/>
            <person name="Andersson S.G.E."/>
            <person name="Forsman M."/>
            <person name="Titball R.W."/>
        </authorList>
    </citation>
    <scope>NUCLEOTIDE SEQUENCE [LARGE SCALE GENOMIC DNA]</scope>
    <source>
        <strain>SCHU S4 / Schu 4</strain>
    </source>
</reference>
<evidence type="ECO:0000255" key="1">
    <source>
        <dbReference type="HAMAP-Rule" id="MF_00087"/>
    </source>
</evidence>
<comment type="function">
    <text evidence="1">Catalyzes the NADPH-dependent reduction of glutamyl-tRNA(Glu) to glutamate 1-semialdehyde (GSA).</text>
</comment>
<comment type="catalytic activity">
    <reaction evidence="1">
        <text>(S)-4-amino-5-oxopentanoate + tRNA(Glu) + NADP(+) = L-glutamyl-tRNA(Glu) + NADPH + H(+)</text>
        <dbReference type="Rhea" id="RHEA:12344"/>
        <dbReference type="Rhea" id="RHEA-COMP:9663"/>
        <dbReference type="Rhea" id="RHEA-COMP:9680"/>
        <dbReference type="ChEBI" id="CHEBI:15378"/>
        <dbReference type="ChEBI" id="CHEBI:57501"/>
        <dbReference type="ChEBI" id="CHEBI:57783"/>
        <dbReference type="ChEBI" id="CHEBI:58349"/>
        <dbReference type="ChEBI" id="CHEBI:78442"/>
        <dbReference type="ChEBI" id="CHEBI:78520"/>
        <dbReference type="EC" id="1.2.1.70"/>
    </reaction>
</comment>
<comment type="pathway">
    <text evidence="1">Porphyrin-containing compound metabolism; protoporphyrin-IX biosynthesis; 5-aminolevulinate from L-glutamyl-tRNA(Glu): step 1/2.</text>
</comment>
<comment type="subunit">
    <text evidence="1">Homodimer.</text>
</comment>
<comment type="domain">
    <text evidence="1">Possesses an unusual extended V-shaped dimeric structure with each monomer consisting of three distinct domains arranged along a curved 'spinal' alpha-helix. The N-terminal catalytic domain specifically recognizes the glutamate moiety of the substrate. The second domain is the NADPH-binding domain, and the third C-terminal domain is responsible for dimerization.</text>
</comment>
<comment type="miscellaneous">
    <text evidence="1">During catalysis, the active site Cys acts as a nucleophile attacking the alpha-carbonyl group of tRNA-bound glutamate with the formation of a thioester intermediate between enzyme and glutamate, and the concomitant release of tRNA(Glu). The thioester intermediate is finally reduced by direct hydride transfer from NADPH, to form the product GSA.</text>
</comment>
<comment type="similarity">
    <text evidence="1">Belongs to the glutamyl-tRNA reductase family.</text>
</comment>